<gene>
    <name type="primary">nreC</name>
    <name type="ordered locus">SE_1969</name>
</gene>
<dbReference type="EMBL" id="AE015929">
    <property type="protein sequence ID" value="AAO05610.1"/>
    <property type="molecule type" value="Genomic_DNA"/>
</dbReference>
<dbReference type="RefSeq" id="NP_765524.1">
    <property type="nucleotide sequence ID" value="NC_004461.1"/>
</dbReference>
<dbReference type="RefSeq" id="WP_002485230.1">
    <property type="nucleotide sequence ID" value="NC_004461.1"/>
</dbReference>
<dbReference type="SMR" id="Q8CN75"/>
<dbReference type="KEGG" id="sep:SE_1969"/>
<dbReference type="PATRIC" id="fig|176280.10.peg.1922"/>
<dbReference type="eggNOG" id="COG2197">
    <property type="taxonomic scope" value="Bacteria"/>
</dbReference>
<dbReference type="HOGENOM" id="CLU_000445_90_1_9"/>
<dbReference type="OrthoDB" id="9780153at2"/>
<dbReference type="Proteomes" id="UP000001411">
    <property type="component" value="Chromosome"/>
</dbReference>
<dbReference type="GO" id="GO:0005737">
    <property type="term" value="C:cytoplasm"/>
    <property type="evidence" value="ECO:0007669"/>
    <property type="project" value="UniProtKB-SubCell"/>
</dbReference>
<dbReference type="GO" id="GO:0003677">
    <property type="term" value="F:DNA binding"/>
    <property type="evidence" value="ECO:0007669"/>
    <property type="project" value="UniProtKB-KW"/>
</dbReference>
<dbReference type="GO" id="GO:0000160">
    <property type="term" value="P:phosphorelay signal transduction system"/>
    <property type="evidence" value="ECO:0007669"/>
    <property type="project" value="UniProtKB-KW"/>
</dbReference>
<dbReference type="GO" id="GO:0006355">
    <property type="term" value="P:regulation of DNA-templated transcription"/>
    <property type="evidence" value="ECO:0007669"/>
    <property type="project" value="InterPro"/>
</dbReference>
<dbReference type="CDD" id="cd06170">
    <property type="entry name" value="LuxR_C_like"/>
    <property type="match status" value="1"/>
</dbReference>
<dbReference type="CDD" id="cd17535">
    <property type="entry name" value="REC_NarL-like"/>
    <property type="match status" value="1"/>
</dbReference>
<dbReference type="Gene3D" id="3.40.50.2300">
    <property type="match status" value="1"/>
</dbReference>
<dbReference type="InterPro" id="IPR011006">
    <property type="entry name" value="CheY-like_superfamily"/>
</dbReference>
<dbReference type="InterPro" id="IPR016032">
    <property type="entry name" value="Sig_transdc_resp-reg_C-effctor"/>
</dbReference>
<dbReference type="InterPro" id="IPR001789">
    <property type="entry name" value="Sig_transdc_resp-reg_receiver"/>
</dbReference>
<dbReference type="InterPro" id="IPR000792">
    <property type="entry name" value="Tscrpt_reg_LuxR_C"/>
</dbReference>
<dbReference type="InterPro" id="IPR039420">
    <property type="entry name" value="WalR-like"/>
</dbReference>
<dbReference type="PANTHER" id="PTHR43214:SF37">
    <property type="entry name" value="TRANSCRIPTIONAL REGULATORY PROTEIN YDFI"/>
    <property type="match status" value="1"/>
</dbReference>
<dbReference type="PANTHER" id="PTHR43214">
    <property type="entry name" value="TWO-COMPONENT RESPONSE REGULATOR"/>
    <property type="match status" value="1"/>
</dbReference>
<dbReference type="Pfam" id="PF00196">
    <property type="entry name" value="GerE"/>
    <property type="match status" value="1"/>
</dbReference>
<dbReference type="Pfam" id="PF00072">
    <property type="entry name" value="Response_reg"/>
    <property type="match status" value="1"/>
</dbReference>
<dbReference type="PRINTS" id="PR00038">
    <property type="entry name" value="HTHLUXR"/>
</dbReference>
<dbReference type="SMART" id="SM00421">
    <property type="entry name" value="HTH_LUXR"/>
    <property type="match status" value="1"/>
</dbReference>
<dbReference type="SMART" id="SM00448">
    <property type="entry name" value="REC"/>
    <property type="match status" value="1"/>
</dbReference>
<dbReference type="SUPFAM" id="SSF46894">
    <property type="entry name" value="C-terminal effector domain of the bipartite response regulators"/>
    <property type="match status" value="1"/>
</dbReference>
<dbReference type="SUPFAM" id="SSF52172">
    <property type="entry name" value="CheY-like"/>
    <property type="match status" value="1"/>
</dbReference>
<dbReference type="PROSITE" id="PS00622">
    <property type="entry name" value="HTH_LUXR_1"/>
    <property type="match status" value="1"/>
</dbReference>
<dbReference type="PROSITE" id="PS50043">
    <property type="entry name" value="HTH_LUXR_2"/>
    <property type="match status" value="1"/>
</dbReference>
<dbReference type="PROSITE" id="PS50110">
    <property type="entry name" value="RESPONSE_REGULATORY"/>
    <property type="match status" value="1"/>
</dbReference>
<reference key="1">
    <citation type="journal article" date="2003" name="Mol. Microbiol.">
        <title>Genome-based analysis of virulence genes in a non-biofilm-forming Staphylococcus epidermidis strain (ATCC 12228).</title>
        <authorList>
            <person name="Zhang Y.-Q."/>
            <person name="Ren S.-X."/>
            <person name="Li H.-L."/>
            <person name="Wang Y.-X."/>
            <person name="Fu G."/>
            <person name="Yang J."/>
            <person name="Qin Z.-Q."/>
            <person name="Miao Y.-G."/>
            <person name="Wang W.-Y."/>
            <person name="Chen R.-S."/>
            <person name="Shen Y."/>
            <person name="Chen Z."/>
            <person name="Yuan Z.-H."/>
            <person name="Zhao G.-P."/>
            <person name="Qu D."/>
            <person name="Danchin A."/>
            <person name="Wen Y.-M."/>
        </authorList>
    </citation>
    <scope>NUCLEOTIDE SEQUENCE [LARGE SCALE GENOMIC DNA]</scope>
    <source>
        <strain>ATCC 12228 / FDA PCI 1200</strain>
    </source>
</reference>
<name>NREC_STAES</name>
<sequence>MKIVIADDHAVVRTGFSMILNYQEDMEVVATAADGVEAYQKVLEHRPDVLILDLSMPPGESGLIATSKISESFPETKILILTMFDDEEYLFHMLKSGAKGYILKNSPDEQLILAVRTVYQGETYVDMKLTTSLVNEFVNQSQTDEVSSSSDPFKILSKRELEILPLIAKGYGNKDIAEKLFVSVKTVEAHKTHIMTKLNLKSKPELVEYALKKKLLEF</sequence>
<organism>
    <name type="scientific">Staphylococcus epidermidis (strain ATCC 12228 / FDA PCI 1200)</name>
    <dbReference type="NCBI Taxonomy" id="176280"/>
    <lineage>
        <taxon>Bacteria</taxon>
        <taxon>Bacillati</taxon>
        <taxon>Bacillota</taxon>
        <taxon>Bacilli</taxon>
        <taxon>Bacillales</taxon>
        <taxon>Staphylococcaceae</taxon>
        <taxon>Staphylococcus</taxon>
    </lineage>
</organism>
<keyword id="KW-0010">Activator</keyword>
<keyword id="KW-0963">Cytoplasm</keyword>
<keyword id="KW-0238">DNA-binding</keyword>
<keyword id="KW-0597">Phosphoprotein</keyword>
<keyword id="KW-0804">Transcription</keyword>
<keyword id="KW-0805">Transcription regulation</keyword>
<keyword id="KW-0902">Two-component regulatory system</keyword>
<comment type="function">
    <text evidence="1">Member of the two-component regulatory system NreB/NreC involved in the control of dissimilatory nitrate/nitrite reduction in response to oxygen. Phosphorylated NreC binds to a GC-rich palindromic sequence at the promoters of the nitrate (narGHJI) and nitrite (nir) reductase operons, as well as the putative nitrate transporter gene narT, and activates their expression (By similarity).</text>
</comment>
<comment type="subcellular location">
    <subcellularLocation>
        <location evidence="4">Cytoplasm</location>
    </subcellularLocation>
</comment>
<comment type="PTM">
    <text evidence="1">Phosphorylated by NreB.</text>
</comment>
<proteinExistence type="inferred from homology"/>
<accession>Q8CN75</accession>
<feature type="chain" id="PRO_0000349357" description="Oxygen regulatory protein NreC">
    <location>
        <begin position="1"/>
        <end position="218"/>
    </location>
</feature>
<feature type="domain" description="Response regulatory" evidence="2">
    <location>
        <begin position="2"/>
        <end position="119"/>
    </location>
</feature>
<feature type="domain" description="HTH luxR-type" evidence="3">
    <location>
        <begin position="149"/>
        <end position="214"/>
    </location>
</feature>
<feature type="DNA-binding region" description="H-T-H motif" evidence="3">
    <location>
        <begin position="173"/>
        <end position="192"/>
    </location>
</feature>
<feature type="modified residue" description="4-aspartylphosphate" evidence="2">
    <location>
        <position position="53"/>
    </location>
</feature>
<protein>
    <recommendedName>
        <fullName>Oxygen regulatory protein NreC</fullName>
    </recommendedName>
    <alternativeName>
        <fullName>Nitrogen regulation protein C</fullName>
    </alternativeName>
</protein>
<evidence type="ECO:0000250" key="1"/>
<evidence type="ECO:0000255" key="2">
    <source>
        <dbReference type="PROSITE-ProRule" id="PRU00169"/>
    </source>
</evidence>
<evidence type="ECO:0000255" key="3">
    <source>
        <dbReference type="PROSITE-ProRule" id="PRU00411"/>
    </source>
</evidence>
<evidence type="ECO:0000305" key="4"/>